<reference key="1">
    <citation type="journal article" date="2010" name="J. Bacteriol.">
        <title>Whole genome sequences of two Xylella fastidiosa strains (M12 and M23) causing almond leaf scorch disease in California.</title>
        <authorList>
            <person name="Chen J."/>
            <person name="Xie G."/>
            <person name="Han S."/>
            <person name="Chertkov O."/>
            <person name="Sims D."/>
            <person name="Civerolo E.L."/>
        </authorList>
    </citation>
    <scope>NUCLEOTIDE SEQUENCE [LARGE SCALE GENOMIC DNA]</scope>
    <source>
        <strain>M12</strain>
    </source>
</reference>
<sequence length="562" mass="62536">MKAPLRALICQGIEALRSNGTLPTNTLPPDFVVERPKTRKHGDFATNVAMLLSKATGSNPRLLAQTLVAALPTSADIARIEIAGPGFINFHMHPVAYQHETINVLKQDNDYGRNLSGQSRTVGVEYVSANPTGPLHVGHGRAAAIGDCLARLLEANGWNVKREFYYNDAGVQIDNLVRSVQARARGLKPGDALWPTDAYNGEYIADIAKAYLAGDSINMVDTIITSTKNVDDTAAIHHFAVNYLRNEQNHDLAAFNVDFDIYFLESSLYKDGKVEETVQKLINSGHTYEEGGALWLKSTHFGDDKDRVMRKSDGSYTYFVPDIAYHLSKWQRGYERAITELGADHHGSLARVHAGLQALEIGIPPGWPEYVLHQMVTVMRGGEEVKLSKRSGGYVTLRDLIEETSTDATRWFLIARKPDSQLTFDIDLARQKSNDNPVFYVQYAYARVCSLMHQAHEKNLNYDQTSGMASLDQLSDNTSLCLMIEISRYPEIVQIACELLEPHLIAQYLRELAHAFHTWYHNTPVLVENAVERNAKLTLACATRQVLANGLNLLGVGTPEKM</sequence>
<gene>
    <name evidence="1" type="primary">argS</name>
    <name type="ordered locus">Xfasm12_0124</name>
</gene>
<organism>
    <name type="scientific">Xylella fastidiosa (strain M12)</name>
    <dbReference type="NCBI Taxonomy" id="405440"/>
    <lineage>
        <taxon>Bacteria</taxon>
        <taxon>Pseudomonadati</taxon>
        <taxon>Pseudomonadota</taxon>
        <taxon>Gammaproteobacteria</taxon>
        <taxon>Lysobacterales</taxon>
        <taxon>Lysobacteraceae</taxon>
        <taxon>Xylella</taxon>
    </lineage>
</organism>
<name>SYR_XYLFM</name>
<protein>
    <recommendedName>
        <fullName evidence="1">Arginine--tRNA ligase</fullName>
        <ecNumber evidence="1">6.1.1.19</ecNumber>
    </recommendedName>
    <alternativeName>
        <fullName evidence="1">Arginyl-tRNA synthetase</fullName>
        <shortName evidence="1">ArgRS</shortName>
    </alternativeName>
</protein>
<proteinExistence type="inferred from homology"/>
<dbReference type="EC" id="6.1.1.19" evidence="1"/>
<dbReference type="EMBL" id="CP000941">
    <property type="protein sequence ID" value="ACA11163.1"/>
    <property type="molecule type" value="Genomic_DNA"/>
</dbReference>
<dbReference type="RefSeq" id="WP_012337565.1">
    <property type="nucleotide sequence ID" value="NC_010513.1"/>
</dbReference>
<dbReference type="SMR" id="B0U1H9"/>
<dbReference type="KEGG" id="xfm:Xfasm12_0124"/>
<dbReference type="HOGENOM" id="CLU_006406_0_1_6"/>
<dbReference type="GO" id="GO:0005737">
    <property type="term" value="C:cytoplasm"/>
    <property type="evidence" value="ECO:0007669"/>
    <property type="project" value="UniProtKB-SubCell"/>
</dbReference>
<dbReference type="GO" id="GO:0004814">
    <property type="term" value="F:arginine-tRNA ligase activity"/>
    <property type="evidence" value="ECO:0007669"/>
    <property type="project" value="UniProtKB-UniRule"/>
</dbReference>
<dbReference type="GO" id="GO:0005524">
    <property type="term" value="F:ATP binding"/>
    <property type="evidence" value="ECO:0007669"/>
    <property type="project" value="UniProtKB-UniRule"/>
</dbReference>
<dbReference type="GO" id="GO:0006420">
    <property type="term" value="P:arginyl-tRNA aminoacylation"/>
    <property type="evidence" value="ECO:0007669"/>
    <property type="project" value="UniProtKB-UniRule"/>
</dbReference>
<dbReference type="CDD" id="cd00671">
    <property type="entry name" value="ArgRS_core"/>
    <property type="match status" value="1"/>
</dbReference>
<dbReference type="FunFam" id="1.10.730.10:FF:000008">
    <property type="entry name" value="Arginine--tRNA ligase"/>
    <property type="match status" value="1"/>
</dbReference>
<dbReference type="FunFam" id="3.30.1360.70:FF:000003">
    <property type="entry name" value="Arginine--tRNA ligase"/>
    <property type="match status" value="1"/>
</dbReference>
<dbReference type="FunFam" id="3.40.50.620:FF:000062">
    <property type="entry name" value="Arginine--tRNA ligase"/>
    <property type="match status" value="1"/>
</dbReference>
<dbReference type="Gene3D" id="3.30.1360.70">
    <property type="entry name" value="Arginyl tRNA synthetase N-terminal domain"/>
    <property type="match status" value="1"/>
</dbReference>
<dbReference type="Gene3D" id="3.40.50.620">
    <property type="entry name" value="HUPs"/>
    <property type="match status" value="1"/>
</dbReference>
<dbReference type="Gene3D" id="1.10.730.10">
    <property type="entry name" value="Isoleucyl-tRNA Synthetase, Domain 1"/>
    <property type="match status" value="1"/>
</dbReference>
<dbReference type="HAMAP" id="MF_00123">
    <property type="entry name" value="Arg_tRNA_synth"/>
    <property type="match status" value="1"/>
</dbReference>
<dbReference type="InterPro" id="IPR001412">
    <property type="entry name" value="aa-tRNA-synth_I_CS"/>
</dbReference>
<dbReference type="InterPro" id="IPR001278">
    <property type="entry name" value="Arg-tRNA-ligase"/>
</dbReference>
<dbReference type="InterPro" id="IPR005148">
    <property type="entry name" value="Arg-tRNA-synth_N"/>
</dbReference>
<dbReference type="InterPro" id="IPR036695">
    <property type="entry name" value="Arg-tRNA-synth_N_sf"/>
</dbReference>
<dbReference type="InterPro" id="IPR035684">
    <property type="entry name" value="ArgRS_core"/>
</dbReference>
<dbReference type="InterPro" id="IPR008909">
    <property type="entry name" value="DALR_anticod-bd"/>
</dbReference>
<dbReference type="InterPro" id="IPR014729">
    <property type="entry name" value="Rossmann-like_a/b/a_fold"/>
</dbReference>
<dbReference type="InterPro" id="IPR009080">
    <property type="entry name" value="tRNAsynth_Ia_anticodon-bd"/>
</dbReference>
<dbReference type="NCBIfam" id="TIGR00456">
    <property type="entry name" value="argS"/>
    <property type="match status" value="1"/>
</dbReference>
<dbReference type="PANTHER" id="PTHR11956:SF5">
    <property type="entry name" value="ARGININE--TRNA LIGASE, CYTOPLASMIC"/>
    <property type="match status" value="1"/>
</dbReference>
<dbReference type="PANTHER" id="PTHR11956">
    <property type="entry name" value="ARGINYL-TRNA SYNTHETASE"/>
    <property type="match status" value="1"/>
</dbReference>
<dbReference type="Pfam" id="PF03485">
    <property type="entry name" value="Arg_tRNA_synt_N"/>
    <property type="match status" value="1"/>
</dbReference>
<dbReference type="Pfam" id="PF05746">
    <property type="entry name" value="DALR_1"/>
    <property type="match status" value="1"/>
</dbReference>
<dbReference type="Pfam" id="PF00750">
    <property type="entry name" value="tRNA-synt_1d"/>
    <property type="match status" value="1"/>
</dbReference>
<dbReference type="PRINTS" id="PR01038">
    <property type="entry name" value="TRNASYNTHARG"/>
</dbReference>
<dbReference type="SMART" id="SM01016">
    <property type="entry name" value="Arg_tRNA_synt_N"/>
    <property type="match status" value="1"/>
</dbReference>
<dbReference type="SMART" id="SM00836">
    <property type="entry name" value="DALR_1"/>
    <property type="match status" value="1"/>
</dbReference>
<dbReference type="SUPFAM" id="SSF47323">
    <property type="entry name" value="Anticodon-binding domain of a subclass of class I aminoacyl-tRNA synthetases"/>
    <property type="match status" value="1"/>
</dbReference>
<dbReference type="SUPFAM" id="SSF55190">
    <property type="entry name" value="Arginyl-tRNA synthetase (ArgRS), N-terminal 'additional' domain"/>
    <property type="match status" value="1"/>
</dbReference>
<dbReference type="SUPFAM" id="SSF52374">
    <property type="entry name" value="Nucleotidylyl transferase"/>
    <property type="match status" value="1"/>
</dbReference>
<dbReference type="PROSITE" id="PS00178">
    <property type="entry name" value="AA_TRNA_LIGASE_I"/>
    <property type="match status" value="1"/>
</dbReference>
<evidence type="ECO:0000255" key="1">
    <source>
        <dbReference type="HAMAP-Rule" id="MF_00123"/>
    </source>
</evidence>
<comment type="catalytic activity">
    <reaction evidence="1">
        <text>tRNA(Arg) + L-arginine + ATP = L-arginyl-tRNA(Arg) + AMP + diphosphate</text>
        <dbReference type="Rhea" id="RHEA:20301"/>
        <dbReference type="Rhea" id="RHEA-COMP:9658"/>
        <dbReference type="Rhea" id="RHEA-COMP:9673"/>
        <dbReference type="ChEBI" id="CHEBI:30616"/>
        <dbReference type="ChEBI" id="CHEBI:32682"/>
        <dbReference type="ChEBI" id="CHEBI:33019"/>
        <dbReference type="ChEBI" id="CHEBI:78442"/>
        <dbReference type="ChEBI" id="CHEBI:78513"/>
        <dbReference type="ChEBI" id="CHEBI:456215"/>
        <dbReference type="EC" id="6.1.1.19"/>
    </reaction>
</comment>
<comment type="subunit">
    <text evidence="1">Monomer.</text>
</comment>
<comment type="subcellular location">
    <subcellularLocation>
        <location evidence="1">Cytoplasm</location>
    </subcellularLocation>
</comment>
<comment type="similarity">
    <text evidence="1">Belongs to the class-I aminoacyl-tRNA synthetase family.</text>
</comment>
<accession>B0U1H9</accession>
<keyword id="KW-0030">Aminoacyl-tRNA synthetase</keyword>
<keyword id="KW-0067">ATP-binding</keyword>
<keyword id="KW-0963">Cytoplasm</keyword>
<keyword id="KW-0436">Ligase</keyword>
<keyword id="KW-0547">Nucleotide-binding</keyword>
<keyword id="KW-0648">Protein biosynthesis</keyword>
<feature type="chain" id="PRO_1000095424" description="Arginine--tRNA ligase">
    <location>
        <begin position="1"/>
        <end position="562"/>
    </location>
</feature>
<feature type="short sequence motif" description="'HIGH' region">
    <location>
        <begin position="129"/>
        <end position="139"/>
    </location>
</feature>